<keyword id="KW-0963">Cytoplasm</keyword>
<keyword id="KW-0342">GTP-binding</keyword>
<keyword id="KW-0396">Initiation factor</keyword>
<keyword id="KW-0547">Nucleotide-binding</keyword>
<keyword id="KW-0648">Protein biosynthesis</keyword>
<proteinExistence type="inferred from homology"/>
<dbReference type="EMBL" id="FM242711">
    <property type="protein sequence ID" value="CAS05097.1"/>
    <property type="molecule type" value="Genomic_DNA"/>
</dbReference>
<dbReference type="RefSeq" id="WP_003727494.1">
    <property type="nucleotide sequence ID" value="NC_012488.1"/>
</dbReference>
<dbReference type="SMR" id="C1L2N1"/>
<dbReference type="KEGG" id="lmc:Lm4b_01333"/>
<dbReference type="HOGENOM" id="CLU_006301_5_1_9"/>
<dbReference type="GO" id="GO:0005829">
    <property type="term" value="C:cytosol"/>
    <property type="evidence" value="ECO:0007669"/>
    <property type="project" value="TreeGrafter"/>
</dbReference>
<dbReference type="GO" id="GO:0005525">
    <property type="term" value="F:GTP binding"/>
    <property type="evidence" value="ECO:0007669"/>
    <property type="project" value="UniProtKB-KW"/>
</dbReference>
<dbReference type="GO" id="GO:0003924">
    <property type="term" value="F:GTPase activity"/>
    <property type="evidence" value="ECO:0007669"/>
    <property type="project" value="UniProtKB-UniRule"/>
</dbReference>
<dbReference type="GO" id="GO:0003743">
    <property type="term" value="F:translation initiation factor activity"/>
    <property type="evidence" value="ECO:0007669"/>
    <property type="project" value="UniProtKB-UniRule"/>
</dbReference>
<dbReference type="CDD" id="cd01887">
    <property type="entry name" value="IF2_eIF5B"/>
    <property type="match status" value="1"/>
</dbReference>
<dbReference type="CDD" id="cd03702">
    <property type="entry name" value="IF2_mtIF2_II"/>
    <property type="match status" value="1"/>
</dbReference>
<dbReference type="CDD" id="cd03692">
    <property type="entry name" value="mtIF2_IVc"/>
    <property type="match status" value="1"/>
</dbReference>
<dbReference type="FunFam" id="2.40.30.10:FF:000007">
    <property type="entry name" value="Translation initiation factor IF-2"/>
    <property type="match status" value="1"/>
</dbReference>
<dbReference type="FunFam" id="2.40.30.10:FF:000008">
    <property type="entry name" value="Translation initiation factor IF-2"/>
    <property type="match status" value="1"/>
</dbReference>
<dbReference type="FunFam" id="3.40.50.10050:FF:000001">
    <property type="entry name" value="Translation initiation factor IF-2"/>
    <property type="match status" value="1"/>
</dbReference>
<dbReference type="FunFam" id="3.40.50.300:FF:000019">
    <property type="entry name" value="Translation initiation factor IF-2"/>
    <property type="match status" value="1"/>
</dbReference>
<dbReference type="Gene3D" id="1.10.10.2480">
    <property type="match status" value="1"/>
</dbReference>
<dbReference type="Gene3D" id="3.40.50.300">
    <property type="entry name" value="P-loop containing nucleotide triphosphate hydrolases"/>
    <property type="match status" value="1"/>
</dbReference>
<dbReference type="Gene3D" id="2.40.30.10">
    <property type="entry name" value="Translation factors"/>
    <property type="match status" value="2"/>
</dbReference>
<dbReference type="Gene3D" id="3.40.50.10050">
    <property type="entry name" value="Translation initiation factor IF- 2, domain 3"/>
    <property type="match status" value="1"/>
</dbReference>
<dbReference type="HAMAP" id="MF_00100_B">
    <property type="entry name" value="IF_2_B"/>
    <property type="match status" value="1"/>
</dbReference>
<dbReference type="InterPro" id="IPR053905">
    <property type="entry name" value="EF-G-like_DII"/>
</dbReference>
<dbReference type="InterPro" id="IPR044145">
    <property type="entry name" value="IF2_II"/>
</dbReference>
<dbReference type="InterPro" id="IPR006847">
    <property type="entry name" value="IF2_N"/>
</dbReference>
<dbReference type="InterPro" id="IPR027417">
    <property type="entry name" value="P-loop_NTPase"/>
</dbReference>
<dbReference type="InterPro" id="IPR005225">
    <property type="entry name" value="Small_GTP-bd"/>
</dbReference>
<dbReference type="InterPro" id="IPR000795">
    <property type="entry name" value="T_Tr_GTP-bd_dom"/>
</dbReference>
<dbReference type="InterPro" id="IPR000178">
    <property type="entry name" value="TF_IF2_bacterial-like"/>
</dbReference>
<dbReference type="InterPro" id="IPR015760">
    <property type="entry name" value="TIF_IF2"/>
</dbReference>
<dbReference type="InterPro" id="IPR023115">
    <property type="entry name" value="TIF_IF2_dom3"/>
</dbReference>
<dbReference type="InterPro" id="IPR036925">
    <property type="entry name" value="TIF_IF2_dom3_sf"/>
</dbReference>
<dbReference type="InterPro" id="IPR009000">
    <property type="entry name" value="Transl_B-barrel_sf"/>
</dbReference>
<dbReference type="NCBIfam" id="TIGR00487">
    <property type="entry name" value="IF-2"/>
    <property type="match status" value="1"/>
</dbReference>
<dbReference type="NCBIfam" id="TIGR00231">
    <property type="entry name" value="small_GTP"/>
    <property type="match status" value="1"/>
</dbReference>
<dbReference type="PANTHER" id="PTHR43381:SF5">
    <property type="entry name" value="TR-TYPE G DOMAIN-CONTAINING PROTEIN"/>
    <property type="match status" value="1"/>
</dbReference>
<dbReference type="PANTHER" id="PTHR43381">
    <property type="entry name" value="TRANSLATION INITIATION FACTOR IF-2-RELATED"/>
    <property type="match status" value="1"/>
</dbReference>
<dbReference type="Pfam" id="PF22042">
    <property type="entry name" value="EF-G_D2"/>
    <property type="match status" value="1"/>
</dbReference>
<dbReference type="Pfam" id="PF00009">
    <property type="entry name" value="GTP_EFTU"/>
    <property type="match status" value="1"/>
</dbReference>
<dbReference type="Pfam" id="PF11987">
    <property type="entry name" value="IF-2"/>
    <property type="match status" value="1"/>
</dbReference>
<dbReference type="Pfam" id="PF04760">
    <property type="entry name" value="IF2_N"/>
    <property type="match status" value="2"/>
</dbReference>
<dbReference type="SUPFAM" id="SSF52156">
    <property type="entry name" value="Initiation factor IF2/eIF5b, domain 3"/>
    <property type="match status" value="1"/>
</dbReference>
<dbReference type="SUPFAM" id="SSF52540">
    <property type="entry name" value="P-loop containing nucleoside triphosphate hydrolases"/>
    <property type="match status" value="1"/>
</dbReference>
<dbReference type="SUPFAM" id="SSF50447">
    <property type="entry name" value="Translation proteins"/>
    <property type="match status" value="2"/>
</dbReference>
<dbReference type="PROSITE" id="PS51722">
    <property type="entry name" value="G_TR_2"/>
    <property type="match status" value="1"/>
</dbReference>
<dbReference type="PROSITE" id="PS01176">
    <property type="entry name" value="IF2"/>
    <property type="match status" value="1"/>
</dbReference>
<gene>
    <name evidence="2" type="primary">infB</name>
    <name type="ordered locus">Lm4b_01333</name>
</gene>
<organism>
    <name type="scientific">Listeria monocytogenes serotype 4b (strain CLIP80459)</name>
    <dbReference type="NCBI Taxonomy" id="568819"/>
    <lineage>
        <taxon>Bacteria</taxon>
        <taxon>Bacillati</taxon>
        <taxon>Bacillota</taxon>
        <taxon>Bacilli</taxon>
        <taxon>Bacillales</taxon>
        <taxon>Listeriaceae</taxon>
        <taxon>Listeria</taxon>
    </lineage>
</organism>
<sequence length="782" mass="84955">MSKVRVYEYAKEHQVSSKKVIEALKDLGIEVANHMSTINENALRQLDNAIDGTNKKAEAPKKETTSNENGNSKGPNKPNMTNSNEKSNKPNNPAGQANKPATANKSQGAKPATNKPANTSKQTQSSGNQQQAGGQKRNNNNNSNRPGGGNPNRPGGNNRPNRGGNFNNKGRNTKKKGKLNHSTVPPTPPKPKELPEKIVFSESLTVAELAKKLYREPSELIKKLFMLGVVATINQSLDKDAIELICDDYGVQVEEEIKVDVTDLDVYFENELNEAVDESKLVERPPVVTIMGHVDHGKTTLLDSLRNTKVTLGEAGGITQHIGAYQLEIHDKKITFLDTPGHAAFTAMRARGAQITDITILVVAADDGVMPQTIEAINHAKAAGMPIIVAVNKIDKPQANPDRVMQELTEYELVPEAWGGDTIFAPISAKFGEGLENLLDMILLVSEVEELKANPDRRAIGSVIEAELDKGRGPVATLLVQDGTLNIGDPIVVGNTFGRVRAMVNDLGRRVKKVGPSTPVEITGLNDVPQAGDRFVVFEDEKTARNIGETRASRALVAQRSATNRVSLDNLFEHMKAGEMKEVNVIIKADVQGSVEALAASLRKIDVEGVNVKIIHTAVGAINESDITLAAASNAIVIGFNVRPTAQAREAAENESVDIRLHRVIYKAIDEIEAAMKGMLDPEFQEKIIGQAQVRQTINVSKVGTIAGCYVTDGKITRDSGVRIIRDGIVVFEGEIATLKRFKDDAKEVAKGYECGITVQNFNDIKEDDVIEAYVMEEIERK</sequence>
<evidence type="ECO:0000250" key="1"/>
<evidence type="ECO:0000255" key="2">
    <source>
        <dbReference type="HAMAP-Rule" id="MF_00100"/>
    </source>
</evidence>
<evidence type="ECO:0000256" key="3">
    <source>
        <dbReference type="SAM" id="MobiDB-lite"/>
    </source>
</evidence>
<feature type="chain" id="PRO_1000202779" description="Translation initiation factor IF-2">
    <location>
        <begin position="1"/>
        <end position="782"/>
    </location>
</feature>
<feature type="domain" description="tr-type G">
    <location>
        <begin position="283"/>
        <end position="452"/>
    </location>
</feature>
<feature type="region of interest" description="Disordered" evidence="3">
    <location>
        <begin position="47"/>
        <end position="196"/>
    </location>
</feature>
<feature type="region of interest" description="G1" evidence="1">
    <location>
        <begin position="292"/>
        <end position="299"/>
    </location>
</feature>
<feature type="region of interest" description="G2" evidence="1">
    <location>
        <begin position="317"/>
        <end position="321"/>
    </location>
</feature>
<feature type="region of interest" description="G3" evidence="1">
    <location>
        <begin position="338"/>
        <end position="341"/>
    </location>
</feature>
<feature type="region of interest" description="G4" evidence="1">
    <location>
        <begin position="392"/>
        <end position="395"/>
    </location>
</feature>
<feature type="region of interest" description="G5" evidence="1">
    <location>
        <begin position="428"/>
        <end position="430"/>
    </location>
</feature>
<feature type="compositionally biased region" description="Basic and acidic residues" evidence="3">
    <location>
        <begin position="53"/>
        <end position="65"/>
    </location>
</feature>
<feature type="compositionally biased region" description="Polar residues" evidence="3">
    <location>
        <begin position="66"/>
        <end position="81"/>
    </location>
</feature>
<feature type="compositionally biased region" description="Low complexity" evidence="3">
    <location>
        <begin position="82"/>
        <end position="93"/>
    </location>
</feature>
<feature type="compositionally biased region" description="Low complexity" evidence="3">
    <location>
        <begin position="118"/>
        <end position="170"/>
    </location>
</feature>
<feature type="binding site" evidence="2">
    <location>
        <begin position="292"/>
        <end position="299"/>
    </location>
    <ligand>
        <name>GTP</name>
        <dbReference type="ChEBI" id="CHEBI:37565"/>
    </ligand>
</feature>
<feature type="binding site" evidence="2">
    <location>
        <begin position="338"/>
        <end position="342"/>
    </location>
    <ligand>
        <name>GTP</name>
        <dbReference type="ChEBI" id="CHEBI:37565"/>
    </ligand>
</feature>
<feature type="binding site" evidence="2">
    <location>
        <begin position="392"/>
        <end position="395"/>
    </location>
    <ligand>
        <name>GTP</name>
        <dbReference type="ChEBI" id="CHEBI:37565"/>
    </ligand>
</feature>
<accession>C1L2N1</accession>
<reference key="1">
    <citation type="journal article" date="2012" name="BMC Genomics">
        <title>Comparative genomics and transcriptomics of lineages I, II, and III strains of Listeria monocytogenes.</title>
        <authorList>
            <person name="Hain T."/>
            <person name="Ghai R."/>
            <person name="Billion A."/>
            <person name="Kuenne C.T."/>
            <person name="Steinweg C."/>
            <person name="Izar B."/>
            <person name="Mohamed W."/>
            <person name="Mraheil M."/>
            <person name="Domann E."/>
            <person name="Schaffrath S."/>
            <person name="Karst U."/>
            <person name="Goesmann A."/>
            <person name="Oehm S."/>
            <person name="Puhler A."/>
            <person name="Merkl R."/>
            <person name="Vorwerk S."/>
            <person name="Glaser P."/>
            <person name="Garrido P."/>
            <person name="Rusniok C."/>
            <person name="Buchrieser C."/>
            <person name="Goebel W."/>
            <person name="Chakraborty T."/>
        </authorList>
    </citation>
    <scope>NUCLEOTIDE SEQUENCE [LARGE SCALE GENOMIC DNA]</scope>
    <source>
        <strain>CLIP80459</strain>
    </source>
</reference>
<comment type="function">
    <text evidence="2">One of the essential components for the initiation of protein synthesis. Protects formylmethionyl-tRNA from spontaneous hydrolysis and promotes its binding to the 30S ribosomal subunits. Also involved in the hydrolysis of GTP during the formation of the 70S ribosomal complex.</text>
</comment>
<comment type="subcellular location">
    <subcellularLocation>
        <location evidence="2">Cytoplasm</location>
    </subcellularLocation>
</comment>
<comment type="similarity">
    <text evidence="2">Belongs to the TRAFAC class translation factor GTPase superfamily. Classic translation factor GTPase family. IF-2 subfamily.</text>
</comment>
<name>IF2_LISMC</name>
<protein>
    <recommendedName>
        <fullName evidence="2">Translation initiation factor IF-2</fullName>
    </recommendedName>
</protein>